<proteinExistence type="inferred from homology"/>
<sequence>MAYPTLPPNLLSTPNTYSDSVSPTDPEPITPELVSREPEKPAQKAAKTAMNNTSTASKPSESKGETLPCKWTGCSHISDSPDELYDHLCTVHVGRKSTNNLCLTCGWENCGTKCVKRDHITSHLRVHTPLKPHPCAVCGKTFKRPQDLKKHERIHTAEHHQLHKLSKAPTTADPEFNSRVSLSSATRIDRPRSPLSTSLSPTSTSSHSLHSSSSPFDHLLATGFHTDKSVSPTPSALALLHKKQHEELAAYQQKEMLVLQQLAFNQQQSQAYAARLAAEPFGTGAGAKRGQADAFHDLLSDVKKRKVEPVYDQDMIHRLNALVPPSLPTSFPTLPSLGGYNQYQTFPSFNGYPSLPSLHTSIYPTTAPQAQYSNQSPLPIPEIKTEADLAMFNEFMISLGRDAAANKAGPHPMTQSASGSGASNGYSASNSGTPLSETSGGVEDLFNAEELASLGLAGMPGISIHSGGSHNSNDESTHSLSDASPPAVSFGGLYPSLDAMRNRTNSAPDVSALSGAARRPIAGLPRTSMGNAHNTSTNQSTKPSYLSGMFGHSSSQQYDGTTHNYLHGLSNEHHNDYSHSANNGATNAYASFDSLARNKQSFPAATLAPKMFHNKVYRDVAPLGTAVSKRARESAERTNVEDSDREELYADQESNHGYAVSNERAREERTPKIPVRSLIASIRTLSPSTAADGEDDLKLPAISPSHVEPGTDLPPLYSIQRGGHSSGQYRRASSLSSNSTSTSGSSSFNSSLAPSNVASGTTTPRGSTPPRGVPTKRHTEDEIVRGVKRLELGPAEPLRSTTPELPDSGTTEQALERDQKPDISALSLSSSPTPPSNNPPPSVSTANEEGKDMTIEEMRRRHAALIKSWLVAVNLQWRRKKMEEMQRQQREEMEELEEGGEAMNVDERERERVEVVA</sequence>
<gene>
    <name type="primary">RIM101</name>
    <name type="ordered locus">CNH00970</name>
</gene>
<protein>
    <recommendedName>
        <fullName>pH-response transcription factor pacC/RIM101</fullName>
    </recommendedName>
</protein>
<reference key="1">
    <citation type="journal article" date="2005" name="Science">
        <title>The genome of the basidiomycetous yeast and human pathogen Cryptococcus neoformans.</title>
        <authorList>
            <person name="Loftus B.J."/>
            <person name="Fung E."/>
            <person name="Roncaglia P."/>
            <person name="Rowley D."/>
            <person name="Amedeo P."/>
            <person name="Bruno D."/>
            <person name="Vamathevan J."/>
            <person name="Miranda M."/>
            <person name="Anderson I.J."/>
            <person name="Fraser J.A."/>
            <person name="Allen J.E."/>
            <person name="Bosdet I.E."/>
            <person name="Brent M.R."/>
            <person name="Chiu R."/>
            <person name="Doering T.L."/>
            <person name="Donlin M.J."/>
            <person name="D'Souza C.A."/>
            <person name="Fox D.S."/>
            <person name="Grinberg V."/>
            <person name="Fu J."/>
            <person name="Fukushima M."/>
            <person name="Haas B.J."/>
            <person name="Huang J.C."/>
            <person name="Janbon G."/>
            <person name="Jones S.J.M."/>
            <person name="Koo H.L."/>
            <person name="Krzywinski M.I."/>
            <person name="Kwon-Chung K.J."/>
            <person name="Lengeler K.B."/>
            <person name="Maiti R."/>
            <person name="Marra M.A."/>
            <person name="Marra R.E."/>
            <person name="Mathewson C.A."/>
            <person name="Mitchell T.G."/>
            <person name="Pertea M."/>
            <person name="Riggs F.R."/>
            <person name="Salzberg S.L."/>
            <person name="Schein J.E."/>
            <person name="Shvartsbeyn A."/>
            <person name="Shin H."/>
            <person name="Shumway M."/>
            <person name="Specht C.A."/>
            <person name="Suh B.B."/>
            <person name="Tenney A."/>
            <person name="Utterback T.R."/>
            <person name="Wickes B.L."/>
            <person name="Wortman J.R."/>
            <person name="Wye N.H."/>
            <person name="Kronstad J.W."/>
            <person name="Lodge J.K."/>
            <person name="Heitman J."/>
            <person name="Davis R.W."/>
            <person name="Fraser C.M."/>
            <person name="Hyman R.W."/>
        </authorList>
    </citation>
    <scope>NUCLEOTIDE SEQUENCE [LARGE SCALE GENOMIC DNA]</scope>
    <source>
        <strain>JEC21 / ATCC MYA-565</strain>
    </source>
</reference>
<evidence type="ECO:0000250" key="1"/>
<evidence type="ECO:0000255" key="2"/>
<evidence type="ECO:0000255" key="3">
    <source>
        <dbReference type="PROSITE-ProRule" id="PRU00042"/>
    </source>
</evidence>
<evidence type="ECO:0000256" key="4">
    <source>
        <dbReference type="SAM" id="MobiDB-lite"/>
    </source>
</evidence>
<evidence type="ECO:0000305" key="5"/>
<organism>
    <name type="scientific">Cryptococcus neoformans var. neoformans serotype D (strain JEC21 / ATCC MYA-565)</name>
    <name type="common">Filobasidiella neoformans</name>
    <dbReference type="NCBI Taxonomy" id="214684"/>
    <lineage>
        <taxon>Eukaryota</taxon>
        <taxon>Fungi</taxon>
        <taxon>Dikarya</taxon>
        <taxon>Basidiomycota</taxon>
        <taxon>Agaricomycotina</taxon>
        <taxon>Tremellomycetes</taxon>
        <taxon>Tremellales</taxon>
        <taxon>Cryptococcaceae</taxon>
        <taxon>Cryptococcus</taxon>
        <taxon>Cryptococcus neoformans species complex</taxon>
    </lineage>
</organism>
<name>PACC_CRYNJ</name>
<feature type="chain" id="PRO_0000046830" description="pH-response transcription factor pacC/RIM101">
    <location>
        <begin position="1"/>
        <end position="917"/>
    </location>
</feature>
<feature type="zinc finger region" description="C2H2-type 1" evidence="3">
    <location>
        <begin position="67"/>
        <end position="92"/>
    </location>
</feature>
<feature type="zinc finger region" description="C2H2-type 2" evidence="3">
    <location>
        <begin position="103"/>
        <end position="127"/>
    </location>
</feature>
<feature type="zinc finger region" description="C2H2-type 3" evidence="3">
    <location>
        <begin position="133"/>
        <end position="155"/>
    </location>
</feature>
<feature type="region of interest" description="Disordered" evidence="4">
    <location>
        <begin position="1"/>
        <end position="65"/>
    </location>
</feature>
<feature type="region of interest" description="Disordered" evidence="4">
    <location>
        <begin position="157"/>
        <end position="212"/>
    </location>
</feature>
<feature type="region of interest" description="Disordered" evidence="4">
    <location>
        <begin position="406"/>
        <end position="440"/>
    </location>
</feature>
<feature type="region of interest" description="Disordered" evidence="4">
    <location>
        <begin position="465"/>
        <end position="484"/>
    </location>
</feature>
<feature type="region of interest" description="Disordered" evidence="4">
    <location>
        <begin position="522"/>
        <end position="543"/>
    </location>
</feature>
<feature type="region of interest" description="Disordered" evidence="4">
    <location>
        <begin position="628"/>
        <end position="672"/>
    </location>
</feature>
<feature type="region of interest" description="Disordered" evidence="4">
    <location>
        <begin position="686"/>
        <end position="850"/>
    </location>
</feature>
<feature type="region of interest" description="Disordered" evidence="4">
    <location>
        <begin position="888"/>
        <end position="917"/>
    </location>
</feature>
<feature type="coiled-coil region" evidence="2">
    <location>
        <begin position="873"/>
        <end position="914"/>
    </location>
</feature>
<feature type="short sequence motif" description="YPX[LI] motif">
    <location>
        <begin position="494"/>
        <end position="497"/>
    </location>
</feature>
<feature type="compositionally biased region" description="Polar residues" evidence="4">
    <location>
        <begin position="49"/>
        <end position="59"/>
    </location>
</feature>
<feature type="compositionally biased region" description="Low complexity" evidence="4">
    <location>
        <begin position="193"/>
        <end position="212"/>
    </location>
</feature>
<feature type="compositionally biased region" description="Low complexity" evidence="4">
    <location>
        <begin position="416"/>
        <end position="432"/>
    </location>
</feature>
<feature type="compositionally biased region" description="Polar residues" evidence="4">
    <location>
        <begin position="528"/>
        <end position="543"/>
    </location>
</feature>
<feature type="compositionally biased region" description="Basic and acidic residues" evidence="4">
    <location>
        <begin position="630"/>
        <end position="648"/>
    </location>
</feature>
<feature type="compositionally biased region" description="Low complexity" evidence="4">
    <location>
        <begin position="732"/>
        <end position="770"/>
    </location>
</feature>
<feature type="compositionally biased region" description="Basic and acidic residues" evidence="4">
    <location>
        <begin position="777"/>
        <end position="791"/>
    </location>
</feature>
<feature type="compositionally biased region" description="Polar residues" evidence="4">
    <location>
        <begin position="799"/>
        <end position="813"/>
    </location>
</feature>
<feature type="compositionally biased region" description="Pro residues" evidence="4">
    <location>
        <begin position="832"/>
        <end position="842"/>
    </location>
</feature>
<feature type="compositionally biased region" description="Basic and acidic residues" evidence="4">
    <location>
        <begin position="905"/>
        <end position="917"/>
    </location>
</feature>
<comment type="function">
    <text evidence="1">Transcription factor that mediates regulation of both acid- and alkaline-expressed genes in response to ambient pH. At alkaline ambient pH, activates transcription of alkaline-expressed genes (including RIM101 itself) and represses transcription of acid-expressed genes (By similarity).</text>
</comment>
<comment type="subunit">
    <text evidence="1">Binds to DNA. Interacts with RIM20, which binds to the YPX[LI] motifs and is required for proteolytic processing (By similarity).</text>
</comment>
<comment type="subcellular location">
    <subcellularLocation>
        <location evidence="1">Cytoplasm</location>
    </subcellularLocation>
    <subcellularLocation>
        <location evidence="1">Nucleus</location>
    </subcellularLocation>
</comment>
<comment type="PTM">
    <text evidence="1">Activated by C-terminal proteolytic cleavage by signaling protease (probably palB/RIM13) at neutral to alkaline ambient pH.</text>
</comment>
<comment type="similarity">
    <text evidence="5">Belongs to the pacC/RIM101 family.</text>
</comment>
<accession>P0CS62</accession>
<accession>Q55J93</accession>
<accession>Q5KCH0</accession>
<keyword id="KW-0010">Activator</keyword>
<keyword id="KW-0175">Coiled coil</keyword>
<keyword id="KW-0963">Cytoplasm</keyword>
<keyword id="KW-0238">DNA-binding</keyword>
<keyword id="KW-0479">Metal-binding</keyword>
<keyword id="KW-0539">Nucleus</keyword>
<keyword id="KW-1185">Reference proteome</keyword>
<keyword id="KW-0677">Repeat</keyword>
<keyword id="KW-0678">Repressor</keyword>
<keyword id="KW-0804">Transcription</keyword>
<keyword id="KW-0805">Transcription regulation</keyword>
<keyword id="KW-0862">Zinc</keyword>
<keyword id="KW-0863">Zinc-finger</keyword>
<dbReference type="EMBL" id="AE017348">
    <property type="protein sequence ID" value="AAW44985.1"/>
    <property type="molecule type" value="Genomic_DNA"/>
</dbReference>
<dbReference type="RefSeq" id="XP_572292.1">
    <property type="nucleotide sequence ID" value="XM_572292.1"/>
</dbReference>
<dbReference type="STRING" id="214684.P0CS62"/>
<dbReference type="PaxDb" id="214684-P0CS62"/>
<dbReference type="EnsemblFungi" id="AAW44985">
    <property type="protein sequence ID" value="AAW44985"/>
    <property type="gene ID" value="CNH00970"/>
</dbReference>
<dbReference type="GeneID" id="3259088"/>
<dbReference type="KEGG" id="cne:CNH00970"/>
<dbReference type="VEuPathDB" id="FungiDB:CNH00970"/>
<dbReference type="eggNOG" id="KOG1721">
    <property type="taxonomic scope" value="Eukaryota"/>
</dbReference>
<dbReference type="HOGENOM" id="CLU_317828_0_0_1"/>
<dbReference type="InParanoid" id="P0CS62"/>
<dbReference type="OMA" id="THLCETH"/>
<dbReference type="OrthoDB" id="6155966at2759"/>
<dbReference type="Proteomes" id="UP000002149">
    <property type="component" value="Chromosome 8"/>
</dbReference>
<dbReference type="GO" id="GO:0005737">
    <property type="term" value="C:cytoplasm"/>
    <property type="evidence" value="ECO:0007669"/>
    <property type="project" value="UniProtKB-SubCell"/>
</dbReference>
<dbReference type="GO" id="GO:0005634">
    <property type="term" value="C:nucleus"/>
    <property type="evidence" value="ECO:0000314"/>
    <property type="project" value="CACAO"/>
</dbReference>
<dbReference type="GO" id="GO:0003677">
    <property type="term" value="F:DNA binding"/>
    <property type="evidence" value="ECO:0007669"/>
    <property type="project" value="UniProtKB-KW"/>
</dbReference>
<dbReference type="GO" id="GO:0008270">
    <property type="term" value="F:zinc ion binding"/>
    <property type="evidence" value="ECO:0007669"/>
    <property type="project" value="UniProtKB-KW"/>
</dbReference>
<dbReference type="GO" id="GO:0006351">
    <property type="term" value="P:DNA-templated transcription"/>
    <property type="evidence" value="ECO:0000315"/>
    <property type="project" value="CACAO"/>
</dbReference>
<dbReference type="GO" id="GO:0045944">
    <property type="term" value="P:positive regulation of transcription by RNA polymerase II"/>
    <property type="evidence" value="ECO:0000318"/>
    <property type="project" value="GO_Central"/>
</dbReference>
<dbReference type="FunFam" id="3.30.160.60:FF:002343">
    <property type="entry name" value="Zinc finger protein 33A"/>
    <property type="match status" value="1"/>
</dbReference>
<dbReference type="Gene3D" id="3.30.160.60">
    <property type="entry name" value="Classic Zinc Finger"/>
    <property type="match status" value="2"/>
</dbReference>
<dbReference type="InterPro" id="IPR050806">
    <property type="entry name" value="pacC/RIM101"/>
</dbReference>
<dbReference type="InterPro" id="IPR036236">
    <property type="entry name" value="Znf_C2H2_sf"/>
</dbReference>
<dbReference type="InterPro" id="IPR013087">
    <property type="entry name" value="Znf_C2H2_type"/>
</dbReference>
<dbReference type="PANTHER" id="PTHR47257">
    <property type="entry name" value="PH-RESPONSE TRANSCRIPTION FACTOR PACC/RIM101"/>
    <property type="match status" value="1"/>
</dbReference>
<dbReference type="PANTHER" id="PTHR47257:SF1">
    <property type="entry name" value="PH-RESPONSE TRANSCRIPTION FACTOR PACC_RIM101"/>
    <property type="match status" value="1"/>
</dbReference>
<dbReference type="Pfam" id="PF00096">
    <property type="entry name" value="zf-C2H2"/>
    <property type="match status" value="1"/>
</dbReference>
<dbReference type="SMART" id="SM00355">
    <property type="entry name" value="ZnF_C2H2"/>
    <property type="match status" value="3"/>
</dbReference>
<dbReference type="SUPFAM" id="SSF57667">
    <property type="entry name" value="beta-beta-alpha zinc fingers"/>
    <property type="match status" value="2"/>
</dbReference>
<dbReference type="PROSITE" id="PS00028">
    <property type="entry name" value="ZINC_FINGER_C2H2_1"/>
    <property type="match status" value="2"/>
</dbReference>
<dbReference type="PROSITE" id="PS50157">
    <property type="entry name" value="ZINC_FINGER_C2H2_2"/>
    <property type="match status" value="2"/>
</dbReference>